<proteinExistence type="inferred from homology"/>
<evidence type="ECO:0000255" key="1">
    <source>
        <dbReference type="HAMAP-Rule" id="MF_00089"/>
    </source>
</evidence>
<evidence type="ECO:0000256" key="2">
    <source>
        <dbReference type="SAM" id="MobiDB-lite"/>
    </source>
</evidence>
<feature type="chain" id="PRO_0000242252" description="Phosphomethylpyrimidine synthase">
    <location>
        <begin position="1"/>
        <end position="658"/>
    </location>
</feature>
<feature type="region of interest" description="Disordered" evidence="2">
    <location>
        <begin position="1"/>
        <end position="22"/>
    </location>
</feature>
<feature type="binding site" evidence="1">
    <location>
        <position position="248"/>
    </location>
    <ligand>
        <name>substrate</name>
    </ligand>
</feature>
<feature type="binding site" evidence="1">
    <location>
        <position position="277"/>
    </location>
    <ligand>
        <name>substrate</name>
    </ligand>
</feature>
<feature type="binding site" evidence="1">
    <location>
        <position position="306"/>
    </location>
    <ligand>
        <name>substrate</name>
    </ligand>
</feature>
<feature type="binding site" evidence="1">
    <location>
        <position position="342"/>
    </location>
    <ligand>
        <name>substrate</name>
    </ligand>
</feature>
<feature type="binding site" evidence="1">
    <location>
        <begin position="362"/>
        <end position="364"/>
    </location>
    <ligand>
        <name>substrate</name>
    </ligand>
</feature>
<feature type="binding site" evidence="1">
    <location>
        <begin position="403"/>
        <end position="406"/>
    </location>
    <ligand>
        <name>substrate</name>
    </ligand>
</feature>
<feature type="binding site" evidence="1">
    <location>
        <position position="442"/>
    </location>
    <ligand>
        <name>substrate</name>
    </ligand>
</feature>
<feature type="binding site" evidence="1">
    <location>
        <position position="446"/>
    </location>
    <ligand>
        <name>Zn(2+)</name>
        <dbReference type="ChEBI" id="CHEBI:29105"/>
    </ligand>
</feature>
<feature type="binding site" evidence="1">
    <location>
        <position position="469"/>
    </location>
    <ligand>
        <name>substrate</name>
    </ligand>
</feature>
<feature type="binding site" evidence="1">
    <location>
        <position position="510"/>
    </location>
    <ligand>
        <name>Zn(2+)</name>
        <dbReference type="ChEBI" id="CHEBI:29105"/>
    </ligand>
</feature>
<feature type="binding site" evidence="1">
    <location>
        <position position="590"/>
    </location>
    <ligand>
        <name>[4Fe-4S] cluster</name>
        <dbReference type="ChEBI" id="CHEBI:49883"/>
        <note>4Fe-4S-S-AdoMet</note>
    </ligand>
</feature>
<feature type="binding site" evidence="1">
    <location>
        <position position="593"/>
    </location>
    <ligand>
        <name>[4Fe-4S] cluster</name>
        <dbReference type="ChEBI" id="CHEBI:49883"/>
        <note>4Fe-4S-S-AdoMet</note>
    </ligand>
</feature>
<feature type="binding site" evidence="1">
    <location>
        <position position="598"/>
    </location>
    <ligand>
        <name>[4Fe-4S] cluster</name>
        <dbReference type="ChEBI" id="CHEBI:49883"/>
        <note>4Fe-4S-S-AdoMet</note>
    </ligand>
</feature>
<accession>Q48A96</accession>
<protein>
    <recommendedName>
        <fullName evidence="1">Phosphomethylpyrimidine synthase</fullName>
        <ecNumber evidence="1">4.1.99.17</ecNumber>
    </recommendedName>
    <alternativeName>
        <fullName evidence="1">Hydroxymethylpyrimidine phosphate synthase</fullName>
        <shortName evidence="1">HMP-P synthase</shortName>
        <shortName evidence="1">HMP-phosphate synthase</shortName>
        <shortName evidence="1">HMPP synthase</shortName>
    </alternativeName>
    <alternativeName>
        <fullName evidence="1">Thiamine biosynthesis protein ThiC</fullName>
    </alternativeName>
</protein>
<dbReference type="EC" id="4.1.99.17" evidence="1"/>
<dbReference type="EMBL" id="CP000083">
    <property type="protein sequence ID" value="AAZ28309.1"/>
    <property type="molecule type" value="Genomic_DNA"/>
</dbReference>
<dbReference type="RefSeq" id="WP_011041124.1">
    <property type="nucleotide sequence ID" value="NC_003910.7"/>
</dbReference>
<dbReference type="SMR" id="Q48A96"/>
<dbReference type="STRING" id="167879.CPS_0250"/>
<dbReference type="KEGG" id="cps:CPS_0250"/>
<dbReference type="eggNOG" id="COG0422">
    <property type="taxonomic scope" value="Bacteria"/>
</dbReference>
<dbReference type="HOGENOM" id="CLU_013181_2_1_6"/>
<dbReference type="UniPathway" id="UPA00060"/>
<dbReference type="Proteomes" id="UP000000547">
    <property type="component" value="Chromosome"/>
</dbReference>
<dbReference type="GO" id="GO:0005829">
    <property type="term" value="C:cytosol"/>
    <property type="evidence" value="ECO:0007669"/>
    <property type="project" value="TreeGrafter"/>
</dbReference>
<dbReference type="GO" id="GO:0051539">
    <property type="term" value="F:4 iron, 4 sulfur cluster binding"/>
    <property type="evidence" value="ECO:0007669"/>
    <property type="project" value="UniProtKB-KW"/>
</dbReference>
<dbReference type="GO" id="GO:0016830">
    <property type="term" value="F:carbon-carbon lyase activity"/>
    <property type="evidence" value="ECO:0007669"/>
    <property type="project" value="InterPro"/>
</dbReference>
<dbReference type="GO" id="GO:0008270">
    <property type="term" value="F:zinc ion binding"/>
    <property type="evidence" value="ECO:0007669"/>
    <property type="project" value="UniProtKB-UniRule"/>
</dbReference>
<dbReference type="GO" id="GO:0009228">
    <property type="term" value="P:thiamine biosynthetic process"/>
    <property type="evidence" value="ECO:0007669"/>
    <property type="project" value="UniProtKB-KW"/>
</dbReference>
<dbReference type="GO" id="GO:0009229">
    <property type="term" value="P:thiamine diphosphate biosynthetic process"/>
    <property type="evidence" value="ECO:0007669"/>
    <property type="project" value="UniProtKB-UniRule"/>
</dbReference>
<dbReference type="FunFam" id="3.20.20.540:FF:000001">
    <property type="entry name" value="Phosphomethylpyrimidine synthase"/>
    <property type="match status" value="1"/>
</dbReference>
<dbReference type="Gene3D" id="6.10.250.620">
    <property type="match status" value="1"/>
</dbReference>
<dbReference type="Gene3D" id="3.20.20.540">
    <property type="entry name" value="Radical SAM ThiC family, central domain"/>
    <property type="match status" value="1"/>
</dbReference>
<dbReference type="HAMAP" id="MF_00089">
    <property type="entry name" value="ThiC"/>
    <property type="match status" value="1"/>
</dbReference>
<dbReference type="InterPro" id="IPR037509">
    <property type="entry name" value="ThiC"/>
</dbReference>
<dbReference type="InterPro" id="IPR025747">
    <property type="entry name" value="ThiC-associated_dom"/>
</dbReference>
<dbReference type="InterPro" id="IPR038521">
    <property type="entry name" value="ThiC/Bza_core_dom"/>
</dbReference>
<dbReference type="InterPro" id="IPR002817">
    <property type="entry name" value="ThiC/BzaA/B"/>
</dbReference>
<dbReference type="NCBIfam" id="NF006763">
    <property type="entry name" value="PRK09284.1"/>
    <property type="match status" value="1"/>
</dbReference>
<dbReference type="NCBIfam" id="NF009895">
    <property type="entry name" value="PRK13352.1"/>
    <property type="match status" value="1"/>
</dbReference>
<dbReference type="NCBIfam" id="TIGR00190">
    <property type="entry name" value="thiC"/>
    <property type="match status" value="1"/>
</dbReference>
<dbReference type="PANTHER" id="PTHR30557:SF1">
    <property type="entry name" value="PHOSPHOMETHYLPYRIMIDINE SYNTHASE, CHLOROPLASTIC"/>
    <property type="match status" value="1"/>
</dbReference>
<dbReference type="PANTHER" id="PTHR30557">
    <property type="entry name" value="THIAMINE BIOSYNTHESIS PROTEIN THIC"/>
    <property type="match status" value="1"/>
</dbReference>
<dbReference type="Pfam" id="PF13667">
    <property type="entry name" value="ThiC-associated"/>
    <property type="match status" value="1"/>
</dbReference>
<dbReference type="Pfam" id="PF01964">
    <property type="entry name" value="ThiC_Rad_SAM"/>
    <property type="match status" value="1"/>
</dbReference>
<dbReference type="SFLD" id="SFLDF00407">
    <property type="entry name" value="phosphomethylpyrimidine_syntha"/>
    <property type="match status" value="1"/>
</dbReference>
<dbReference type="SFLD" id="SFLDG01114">
    <property type="entry name" value="phosphomethylpyrimidine_syntha"/>
    <property type="match status" value="1"/>
</dbReference>
<dbReference type="SFLD" id="SFLDS00113">
    <property type="entry name" value="Radical_SAM_Phosphomethylpyrim"/>
    <property type="match status" value="1"/>
</dbReference>
<comment type="function">
    <text evidence="1">Catalyzes the synthesis of the hydroxymethylpyrimidine phosphate (HMP-P) moiety of thiamine from aminoimidazole ribotide (AIR) in a radical S-adenosyl-L-methionine (SAM)-dependent reaction.</text>
</comment>
<comment type="catalytic activity">
    <reaction evidence="1">
        <text>5-amino-1-(5-phospho-beta-D-ribosyl)imidazole + S-adenosyl-L-methionine = 4-amino-2-methyl-5-(phosphooxymethyl)pyrimidine + CO + 5'-deoxyadenosine + formate + L-methionine + 3 H(+)</text>
        <dbReference type="Rhea" id="RHEA:24840"/>
        <dbReference type="ChEBI" id="CHEBI:15378"/>
        <dbReference type="ChEBI" id="CHEBI:15740"/>
        <dbReference type="ChEBI" id="CHEBI:17245"/>
        <dbReference type="ChEBI" id="CHEBI:17319"/>
        <dbReference type="ChEBI" id="CHEBI:57844"/>
        <dbReference type="ChEBI" id="CHEBI:58354"/>
        <dbReference type="ChEBI" id="CHEBI:59789"/>
        <dbReference type="ChEBI" id="CHEBI:137981"/>
        <dbReference type="EC" id="4.1.99.17"/>
    </reaction>
</comment>
<comment type="cofactor">
    <cofactor evidence="1">
        <name>[4Fe-4S] cluster</name>
        <dbReference type="ChEBI" id="CHEBI:49883"/>
    </cofactor>
    <text evidence="1">Binds 1 [4Fe-4S] cluster per subunit. The cluster is coordinated with 3 cysteines and an exchangeable S-adenosyl-L-methionine.</text>
</comment>
<comment type="pathway">
    <text evidence="1">Cofactor biosynthesis; thiamine diphosphate biosynthesis.</text>
</comment>
<comment type="subunit">
    <text evidence="1">Homodimer.</text>
</comment>
<comment type="similarity">
    <text evidence="1">Belongs to the ThiC family.</text>
</comment>
<sequence>MNNSTDAVNPAKKPQTRREKREAAEAFLKNVSDQSFPNSKKVYVQGEIHDIKVGMREITLSDTLVSGSKDKPVYEKNEPLCVYDTSGFYTDENVEIDVHKGIPRLRETWIDARDDVETFTSTHSEFAQQRLDDEGVDEIRFEHLPKMRIAKKGKNVTQMHYARQGIITPEMEYIAIRENLKREEVKDATLLLQHKGQSFGASIPEQITPEFVRDEVARGRAIIPVNINHPECEPMIIGRNFLIKVNANIGNSAVTSSIEEEVEKLVWSTKWGADTVMDLSTGRNIHETREWIMRNSPVPIGTVPIYQALEKVNGVAEDLTWEIFRDTLIEQAEQGVDYFTIHAGVLLRYVPMTAKRVTGIVSRGGSIMAKWCLAHHKENFLYTHFEDICEILKQYDVSFSLGDGLRPGSVADANDEAQFAELHTLGELTKIAWKHDVQTIIEGPGHVPLHMIKENMEEQLEHCGEAPFYTLGPLTTDIAPGYDHITSGIGAANIGWYGCAMLCYVTPKEHLGLPNKEDVKEGLMTYKIAAHAGDLAKGHPGAQIRDNAMSKARFEFRWYDQFNIGLDPERARTYHDETLPQESGKVAHFCSMCGPKFCSMKISQEVREYAANLDKNAIKIQLLDETITLTSDEAIERAMQEKSAEFKATGSEIYQLAE</sequence>
<gene>
    <name evidence="1" type="primary">thiC</name>
    <name type="ordered locus">CPS_0250</name>
</gene>
<name>THIC_COLP3</name>
<reference key="1">
    <citation type="journal article" date="2005" name="Proc. Natl. Acad. Sci. U.S.A.">
        <title>The psychrophilic lifestyle as revealed by the genome sequence of Colwellia psychrerythraea 34H through genomic and proteomic analyses.</title>
        <authorList>
            <person name="Methe B.A."/>
            <person name="Nelson K.E."/>
            <person name="Deming J.W."/>
            <person name="Momen B."/>
            <person name="Melamud E."/>
            <person name="Zhang X."/>
            <person name="Moult J."/>
            <person name="Madupu R."/>
            <person name="Nelson W.C."/>
            <person name="Dodson R.J."/>
            <person name="Brinkac L.M."/>
            <person name="Daugherty S.C."/>
            <person name="Durkin A.S."/>
            <person name="DeBoy R.T."/>
            <person name="Kolonay J.F."/>
            <person name="Sullivan S.A."/>
            <person name="Zhou L."/>
            <person name="Davidsen T.M."/>
            <person name="Wu M."/>
            <person name="Huston A.L."/>
            <person name="Lewis M."/>
            <person name="Weaver B."/>
            <person name="Weidman J.F."/>
            <person name="Khouri H."/>
            <person name="Utterback T.R."/>
            <person name="Feldblyum T.V."/>
            <person name="Fraser C.M."/>
        </authorList>
    </citation>
    <scope>NUCLEOTIDE SEQUENCE [LARGE SCALE GENOMIC DNA]</scope>
    <source>
        <strain>34H / ATCC BAA-681</strain>
    </source>
</reference>
<keyword id="KW-0004">4Fe-4S</keyword>
<keyword id="KW-0408">Iron</keyword>
<keyword id="KW-0411">Iron-sulfur</keyword>
<keyword id="KW-0456">Lyase</keyword>
<keyword id="KW-0479">Metal-binding</keyword>
<keyword id="KW-0949">S-adenosyl-L-methionine</keyword>
<keyword id="KW-0784">Thiamine biosynthesis</keyword>
<keyword id="KW-0862">Zinc</keyword>
<organism>
    <name type="scientific">Colwellia psychrerythraea (strain 34H / ATCC BAA-681)</name>
    <name type="common">Vibrio psychroerythus</name>
    <dbReference type="NCBI Taxonomy" id="167879"/>
    <lineage>
        <taxon>Bacteria</taxon>
        <taxon>Pseudomonadati</taxon>
        <taxon>Pseudomonadota</taxon>
        <taxon>Gammaproteobacteria</taxon>
        <taxon>Alteromonadales</taxon>
        <taxon>Colwelliaceae</taxon>
        <taxon>Colwellia</taxon>
    </lineage>
</organism>